<keyword id="KW-0067">ATP-binding</keyword>
<keyword id="KW-0173">Coenzyme A biosynthesis</keyword>
<keyword id="KW-0963">Cytoplasm</keyword>
<keyword id="KW-0460">Magnesium</keyword>
<keyword id="KW-0547">Nucleotide-binding</keyword>
<keyword id="KW-0548">Nucleotidyltransferase</keyword>
<keyword id="KW-1185">Reference proteome</keyword>
<keyword id="KW-0808">Transferase</keyword>
<accession>Q8YN70</accession>
<dbReference type="EC" id="2.7.7.3" evidence="1"/>
<dbReference type="EMBL" id="BA000019">
    <property type="protein sequence ID" value="BAB76399.1"/>
    <property type="molecule type" value="Genomic_DNA"/>
</dbReference>
<dbReference type="PIR" id="AD2393">
    <property type="entry name" value="AD2393"/>
</dbReference>
<dbReference type="RefSeq" id="WP_010998831.1">
    <property type="nucleotide sequence ID" value="NZ_RSCN01000020.1"/>
</dbReference>
<dbReference type="SMR" id="Q8YN70"/>
<dbReference type="STRING" id="103690.gene:10496753"/>
<dbReference type="KEGG" id="ana:alr4700"/>
<dbReference type="eggNOG" id="COG0669">
    <property type="taxonomic scope" value="Bacteria"/>
</dbReference>
<dbReference type="OrthoDB" id="9806661at2"/>
<dbReference type="UniPathway" id="UPA00241">
    <property type="reaction ID" value="UER00355"/>
</dbReference>
<dbReference type="Proteomes" id="UP000002483">
    <property type="component" value="Chromosome"/>
</dbReference>
<dbReference type="GO" id="GO:0005737">
    <property type="term" value="C:cytoplasm"/>
    <property type="evidence" value="ECO:0007669"/>
    <property type="project" value="UniProtKB-SubCell"/>
</dbReference>
<dbReference type="GO" id="GO:0005524">
    <property type="term" value="F:ATP binding"/>
    <property type="evidence" value="ECO:0007669"/>
    <property type="project" value="UniProtKB-KW"/>
</dbReference>
<dbReference type="GO" id="GO:0004595">
    <property type="term" value="F:pantetheine-phosphate adenylyltransferase activity"/>
    <property type="evidence" value="ECO:0007669"/>
    <property type="project" value="UniProtKB-UniRule"/>
</dbReference>
<dbReference type="GO" id="GO:0015937">
    <property type="term" value="P:coenzyme A biosynthetic process"/>
    <property type="evidence" value="ECO:0007669"/>
    <property type="project" value="UniProtKB-UniRule"/>
</dbReference>
<dbReference type="CDD" id="cd02163">
    <property type="entry name" value="PPAT"/>
    <property type="match status" value="1"/>
</dbReference>
<dbReference type="Gene3D" id="3.40.50.620">
    <property type="entry name" value="HUPs"/>
    <property type="match status" value="1"/>
</dbReference>
<dbReference type="HAMAP" id="MF_00151">
    <property type="entry name" value="PPAT_bact"/>
    <property type="match status" value="1"/>
</dbReference>
<dbReference type="InterPro" id="IPR004821">
    <property type="entry name" value="Cyt_trans-like"/>
</dbReference>
<dbReference type="InterPro" id="IPR001980">
    <property type="entry name" value="PPAT"/>
</dbReference>
<dbReference type="InterPro" id="IPR014729">
    <property type="entry name" value="Rossmann-like_a/b/a_fold"/>
</dbReference>
<dbReference type="NCBIfam" id="TIGR01510">
    <property type="entry name" value="coaD_prev_kdtB"/>
    <property type="match status" value="1"/>
</dbReference>
<dbReference type="NCBIfam" id="TIGR00125">
    <property type="entry name" value="cyt_tran_rel"/>
    <property type="match status" value="1"/>
</dbReference>
<dbReference type="PANTHER" id="PTHR21342">
    <property type="entry name" value="PHOSPHOPANTETHEINE ADENYLYLTRANSFERASE"/>
    <property type="match status" value="1"/>
</dbReference>
<dbReference type="PANTHER" id="PTHR21342:SF1">
    <property type="entry name" value="PHOSPHOPANTETHEINE ADENYLYLTRANSFERASE"/>
    <property type="match status" value="1"/>
</dbReference>
<dbReference type="Pfam" id="PF01467">
    <property type="entry name" value="CTP_transf_like"/>
    <property type="match status" value="1"/>
</dbReference>
<dbReference type="PRINTS" id="PR01020">
    <property type="entry name" value="LPSBIOSNTHSS"/>
</dbReference>
<dbReference type="SUPFAM" id="SSF52374">
    <property type="entry name" value="Nucleotidylyl transferase"/>
    <property type="match status" value="1"/>
</dbReference>
<organism>
    <name type="scientific">Nostoc sp. (strain PCC 7120 / SAG 25.82 / UTEX 2576)</name>
    <dbReference type="NCBI Taxonomy" id="103690"/>
    <lineage>
        <taxon>Bacteria</taxon>
        <taxon>Bacillati</taxon>
        <taxon>Cyanobacteriota</taxon>
        <taxon>Cyanophyceae</taxon>
        <taxon>Nostocales</taxon>
        <taxon>Nostocaceae</taxon>
        <taxon>Nostoc</taxon>
    </lineage>
</organism>
<feature type="chain" id="PRO_0000156159" description="Phosphopantetheine adenylyltransferase">
    <location>
        <begin position="1"/>
        <end position="191"/>
    </location>
</feature>
<feature type="binding site" evidence="1">
    <location>
        <begin position="8"/>
        <end position="9"/>
    </location>
    <ligand>
        <name>ATP</name>
        <dbReference type="ChEBI" id="CHEBI:30616"/>
    </ligand>
</feature>
<feature type="binding site" evidence="1">
    <location>
        <position position="8"/>
    </location>
    <ligand>
        <name>substrate</name>
    </ligand>
</feature>
<feature type="binding site" evidence="1">
    <location>
        <position position="16"/>
    </location>
    <ligand>
        <name>ATP</name>
        <dbReference type="ChEBI" id="CHEBI:30616"/>
    </ligand>
</feature>
<feature type="binding site" evidence="1">
    <location>
        <position position="40"/>
    </location>
    <ligand>
        <name>substrate</name>
    </ligand>
</feature>
<feature type="binding site" evidence="1">
    <location>
        <position position="72"/>
    </location>
    <ligand>
        <name>substrate</name>
    </ligand>
</feature>
<feature type="binding site" evidence="1">
    <location>
        <position position="86"/>
    </location>
    <ligand>
        <name>substrate</name>
    </ligand>
</feature>
<feature type="binding site" evidence="1">
    <location>
        <begin position="87"/>
        <end position="89"/>
    </location>
    <ligand>
        <name>ATP</name>
        <dbReference type="ChEBI" id="CHEBI:30616"/>
    </ligand>
</feature>
<feature type="binding site" evidence="1">
    <location>
        <position position="97"/>
    </location>
    <ligand>
        <name>ATP</name>
        <dbReference type="ChEBI" id="CHEBI:30616"/>
    </ligand>
</feature>
<feature type="binding site" evidence="1">
    <location>
        <begin position="122"/>
        <end position="128"/>
    </location>
    <ligand>
        <name>ATP</name>
        <dbReference type="ChEBI" id="CHEBI:30616"/>
    </ligand>
</feature>
<feature type="site" description="Transition state stabilizer" evidence="1">
    <location>
        <position position="16"/>
    </location>
</feature>
<protein>
    <recommendedName>
        <fullName evidence="1">Phosphopantetheine adenylyltransferase</fullName>
        <ecNumber evidence="1">2.7.7.3</ecNumber>
    </recommendedName>
    <alternativeName>
        <fullName evidence="1">Dephospho-CoA pyrophosphorylase</fullName>
    </alternativeName>
    <alternativeName>
        <fullName evidence="1">Pantetheine-phosphate adenylyltransferase</fullName>
        <shortName evidence="1">PPAT</shortName>
    </alternativeName>
</protein>
<evidence type="ECO:0000255" key="1">
    <source>
        <dbReference type="HAMAP-Rule" id="MF_00151"/>
    </source>
</evidence>
<comment type="function">
    <text evidence="1">Reversibly transfers an adenylyl group from ATP to 4'-phosphopantetheine, yielding dephospho-CoA (dPCoA) and pyrophosphate.</text>
</comment>
<comment type="catalytic activity">
    <reaction evidence="1">
        <text>(R)-4'-phosphopantetheine + ATP + H(+) = 3'-dephospho-CoA + diphosphate</text>
        <dbReference type="Rhea" id="RHEA:19801"/>
        <dbReference type="ChEBI" id="CHEBI:15378"/>
        <dbReference type="ChEBI" id="CHEBI:30616"/>
        <dbReference type="ChEBI" id="CHEBI:33019"/>
        <dbReference type="ChEBI" id="CHEBI:57328"/>
        <dbReference type="ChEBI" id="CHEBI:61723"/>
        <dbReference type="EC" id="2.7.7.3"/>
    </reaction>
</comment>
<comment type="cofactor">
    <cofactor evidence="1">
        <name>Mg(2+)</name>
        <dbReference type="ChEBI" id="CHEBI:18420"/>
    </cofactor>
</comment>
<comment type="pathway">
    <text evidence="1">Cofactor biosynthesis; coenzyme A biosynthesis; CoA from (R)-pantothenate: step 4/5.</text>
</comment>
<comment type="subunit">
    <text evidence="1">Homohexamer.</text>
</comment>
<comment type="subcellular location">
    <subcellularLocation>
        <location evidence="1">Cytoplasm</location>
    </subcellularLocation>
</comment>
<comment type="similarity">
    <text evidence="1">Belongs to the bacterial CoaD family.</text>
</comment>
<sequence length="191" mass="21456">MIAIYPGSFDPITLGHLDIIQRGSRLFDLVIVAVLRNPSKVPLFSVQERLEQIRRTTKHLPNVEADGFDGLTVNYAQQRQAQVLLRGLRAISDFEVELQMAHTNKTLSTQIETVFLATSNEYSFLSSSVVKEIARFGGSVDHLVPPHIALDIYKCYNHNYPTANPTTMEITPPHQNMATVAPQEILQEQET</sequence>
<reference key="1">
    <citation type="journal article" date="2001" name="DNA Res.">
        <title>Complete genomic sequence of the filamentous nitrogen-fixing cyanobacterium Anabaena sp. strain PCC 7120.</title>
        <authorList>
            <person name="Kaneko T."/>
            <person name="Nakamura Y."/>
            <person name="Wolk C.P."/>
            <person name="Kuritz T."/>
            <person name="Sasamoto S."/>
            <person name="Watanabe A."/>
            <person name="Iriguchi M."/>
            <person name="Ishikawa A."/>
            <person name="Kawashima K."/>
            <person name="Kimura T."/>
            <person name="Kishida Y."/>
            <person name="Kohara M."/>
            <person name="Matsumoto M."/>
            <person name="Matsuno A."/>
            <person name="Muraki A."/>
            <person name="Nakazaki N."/>
            <person name="Shimpo S."/>
            <person name="Sugimoto M."/>
            <person name="Takazawa M."/>
            <person name="Yamada M."/>
            <person name="Yasuda M."/>
            <person name="Tabata S."/>
        </authorList>
    </citation>
    <scope>NUCLEOTIDE SEQUENCE [LARGE SCALE GENOMIC DNA]</scope>
    <source>
        <strain>PCC 7120 / SAG 25.82 / UTEX 2576</strain>
    </source>
</reference>
<proteinExistence type="inferred from homology"/>
<name>COAD_NOSS1</name>
<gene>
    <name evidence="1" type="primary">coaD</name>
    <name type="ordered locus">alr4700</name>
</gene>